<evidence type="ECO:0000255" key="1"/>
<evidence type="ECO:0000305" key="2"/>
<reference key="1">
    <citation type="submission" date="1998-05" db="EMBL/GenBank/DDBJ databases">
        <title>Isolation of the Ashbya gossypii LEU2 gene and its use as a marker gene in transformation experiments.</title>
        <authorList>
            <person name="Mohr C."/>
            <person name="Philippsen P."/>
        </authorList>
    </citation>
    <scope>NUCLEOTIDE SEQUENCE [GENOMIC DNA]</scope>
    <source>
        <strain>ATCC 10895 / CBS 109.51 / FGSC 9923 / NRRL Y-1056</strain>
    </source>
</reference>
<reference key="2">
    <citation type="journal article" date="2004" name="Science">
        <title>The Ashbya gossypii genome as a tool for mapping the ancient Saccharomyces cerevisiae genome.</title>
        <authorList>
            <person name="Dietrich F.S."/>
            <person name="Voegeli S."/>
            <person name="Brachat S."/>
            <person name="Lerch A."/>
            <person name="Gates K."/>
            <person name="Steiner S."/>
            <person name="Mohr C."/>
            <person name="Poehlmann R."/>
            <person name="Luedi P."/>
            <person name="Choi S."/>
            <person name="Wing R.A."/>
            <person name="Flavier A."/>
            <person name="Gaffney T.D."/>
            <person name="Philippsen P."/>
        </authorList>
    </citation>
    <scope>NUCLEOTIDE SEQUENCE [LARGE SCALE GENOMIC DNA]</scope>
    <source>
        <strain>ATCC 10895 / CBS 109.51 / FGSC 9923 / NRRL Y-1056</strain>
    </source>
</reference>
<reference key="3">
    <citation type="journal article" date="2013" name="G3 (Bethesda)">
        <title>Genomes of Ashbya fungi isolated from insects reveal four mating-type loci, numerous translocations, lack of transposons, and distinct gene duplications.</title>
        <authorList>
            <person name="Dietrich F.S."/>
            <person name="Voegeli S."/>
            <person name="Kuo S."/>
            <person name="Philippsen P."/>
        </authorList>
    </citation>
    <scope>GENOME REANNOTATION</scope>
    <source>
        <strain>ATCC 10895 / CBS 109.51 / FGSC 9923 / NRRL Y-1056</strain>
    </source>
</reference>
<dbReference type="EMBL" id="AJ006406">
    <property type="protein sequence ID" value="CAA07008.1"/>
    <property type="molecule type" value="Genomic_DNA"/>
</dbReference>
<dbReference type="EMBL" id="AE016814">
    <property type="protein sequence ID" value="AAS50352.1"/>
    <property type="molecule type" value="Genomic_DNA"/>
</dbReference>
<dbReference type="RefSeq" id="NP_982528.1">
    <property type="nucleotide sequence ID" value="NM_207881.1"/>
</dbReference>
<dbReference type="SMR" id="O60029"/>
<dbReference type="FunCoup" id="O60029">
    <property type="interactions" value="767"/>
</dbReference>
<dbReference type="STRING" id="284811.O60029"/>
<dbReference type="EnsemblFungi" id="AAS50352">
    <property type="protein sequence ID" value="AAS50352"/>
    <property type="gene ID" value="AGOS_AAL014C"/>
</dbReference>
<dbReference type="GeneID" id="4618508"/>
<dbReference type="KEGG" id="ago:AGOS_AAL014C"/>
<dbReference type="eggNOG" id="KOG0768">
    <property type="taxonomic scope" value="Eukaryota"/>
</dbReference>
<dbReference type="HOGENOM" id="CLU_015166_3_0_1"/>
<dbReference type="InParanoid" id="O60029"/>
<dbReference type="OMA" id="IGPRTMW"/>
<dbReference type="OrthoDB" id="276989at2759"/>
<dbReference type="Proteomes" id="UP000000591">
    <property type="component" value="Chromosome I"/>
</dbReference>
<dbReference type="GO" id="GO:0005743">
    <property type="term" value="C:mitochondrial inner membrane"/>
    <property type="evidence" value="ECO:0000318"/>
    <property type="project" value="GO_Central"/>
</dbReference>
<dbReference type="GO" id="GO:0000095">
    <property type="term" value="F:S-adenosyl-L-methionine transmembrane transporter activity"/>
    <property type="evidence" value="ECO:0000318"/>
    <property type="project" value="GO_Central"/>
</dbReference>
<dbReference type="FunFam" id="1.50.40.10:FF:000018">
    <property type="entry name" value="S-adenosylmethionine mitochondrial carrier protein-like"/>
    <property type="match status" value="1"/>
</dbReference>
<dbReference type="Gene3D" id="1.50.40.10">
    <property type="entry name" value="Mitochondrial carrier domain"/>
    <property type="match status" value="1"/>
</dbReference>
<dbReference type="InterPro" id="IPR002067">
    <property type="entry name" value="Mit_carrier"/>
</dbReference>
<dbReference type="InterPro" id="IPR018108">
    <property type="entry name" value="Mitochondrial_sb/sol_carrier"/>
</dbReference>
<dbReference type="InterPro" id="IPR023395">
    <property type="entry name" value="Mt_carrier_dom_sf"/>
</dbReference>
<dbReference type="PANTHER" id="PTHR45667">
    <property type="entry name" value="S-ADENOSYLMETHIONINE MITOCHONDRIAL CARRIER PROTEIN"/>
    <property type="match status" value="1"/>
</dbReference>
<dbReference type="Pfam" id="PF00153">
    <property type="entry name" value="Mito_carr"/>
    <property type="match status" value="3"/>
</dbReference>
<dbReference type="PRINTS" id="PR00926">
    <property type="entry name" value="MITOCARRIER"/>
</dbReference>
<dbReference type="SUPFAM" id="SSF103506">
    <property type="entry name" value="Mitochondrial carrier"/>
    <property type="match status" value="1"/>
</dbReference>
<dbReference type="PROSITE" id="PS50920">
    <property type="entry name" value="SOLCAR"/>
    <property type="match status" value="3"/>
</dbReference>
<keyword id="KW-0472">Membrane</keyword>
<keyword id="KW-0496">Mitochondrion</keyword>
<keyword id="KW-0999">Mitochondrion inner membrane</keyword>
<keyword id="KW-1185">Reference proteome</keyword>
<keyword id="KW-0677">Repeat</keyword>
<keyword id="KW-0812">Transmembrane</keyword>
<keyword id="KW-1133">Transmembrane helix</keyword>
<keyword id="KW-0813">Transport</keyword>
<comment type="subcellular location">
    <subcellularLocation>
        <location evidence="2">Mitochondrion inner membrane</location>
        <topology evidence="2">Multi-pass membrane protein</topology>
    </subcellularLocation>
</comment>
<comment type="similarity">
    <text evidence="2">Belongs to the mitochondrial carrier (TC 2.A.29) family.</text>
</comment>
<protein>
    <recommendedName>
        <fullName>Putative mitochondrial carrier protein PET8</fullName>
    </recommendedName>
</protein>
<accession>O60029</accession>
<gene>
    <name type="primary">PET8</name>
    <name type="ordered locus">AAL014C</name>
</gene>
<feature type="chain" id="PRO_0000090685" description="Putative mitochondrial carrier protein PET8">
    <location>
        <begin position="1"/>
        <end position="271"/>
    </location>
</feature>
<feature type="transmembrane region" description="Helical; Name=1" evidence="1">
    <location>
        <begin position="6"/>
        <end position="26"/>
    </location>
</feature>
<feature type="transmembrane region" description="Helical; Name=2" evidence="1">
    <location>
        <begin position="51"/>
        <end position="71"/>
    </location>
</feature>
<feature type="transmembrane region" description="Helical; Name=3" evidence="1">
    <location>
        <begin position="97"/>
        <end position="117"/>
    </location>
</feature>
<feature type="transmembrane region" description="Helical; Name=4" evidence="1">
    <location>
        <begin position="152"/>
        <end position="168"/>
    </location>
</feature>
<feature type="transmembrane region" description="Helical; Name=5" evidence="1">
    <location>
        <begin position="193"/>
        <end position="213"/>
    </location>
</feature>
<feature type="transmembrane region" description="Helical; Name=6" evidence="1">
    <location>
        <begin position="251"/>
        <end position="271"/>
    </location>
</feature>
<feature type="repeat" description="Solcar 1">
    <location>
        <begin position="3"/>
        <end position="76"/>
    </location>
</feature>
<feature type="repeat" description="Solcar 2">
    <location>
        <begin position="91"/>
        <end position="177"/>
    </location>
</feature>
<feature type="repeat" description="Solcar 3">
    <location>
        <begin position="187"/>
        <end position="270"/>
    </location>
</feature>
<name>PET8_EREGS</name>
<organism>
    <name type="scientific">Eremothecium gossypii (strain ATCC 10895 / CBS 109.51 / FGSC 9923 / NRRL Y-1056)</name>
    <name type="common">Yeast</name>
    <name type="synonym">Ashbya gossypii</name>
    <dbReference type="NCBI Taxonomy" id="284811"/>
    <lineage>
        <taxon>Eukaryota</taxon>
        <taxon>Fungi</taxon>
        <taxon>Dikarya</taxon>
        <taxon>Ascomycota</taxon>
        <taxon>Saccharomycotina</taxon>
        <taxon>Saccharomycetes</taxon>
        <taxon>Saccharomycetales</taxon>
        <taxon>Saccharomycetaceae</taxon>
        <taxon>Eremothecium</taxon>
    </lineage>
</organism>
<proteinExistence type="inferred from homology"/>
<sequence>MDSTFLASLVSGAAAGTSTDVVFFPIDTLKTRLQAKGGFFHNGGYRGIYRGLGSAVVASAPGASLFFVTYDSMKQQLRPVMGRWTASEQLAEVLTHMLSSSLGEMSACLVRVPAEVIKQRTQTHHTNSSLQTLRLILRDPTGEGVVRGLYRGWWTTIMREIPFTCIQFPLYEYLKKKWAAYAEIERVSAWQGAVCGSLAGGIAAAATTPLDVLKTRMMLHERRVPMLHLARTLFREEGARVFFRGIGPRTMWISAGGAIFLGVYEAVHSLF</sequence>